<dbReference type="EC" id="4.2.1.11"/>
<dbReference type="EMBL" id="AF123457">
    <property type="protein sequence ID" value="AAG60329.1"/>
    <property type="molecule type" value="mRNA"/>
</dbReference>
<dbReference type="EMBL" id="AY155668">
    <property type="protein sequence ID" value="AAP24057.1"/>
    <property type="molecule type" value="Genomic_DNA"/>
</dbReference>
<dbReference type="SMR" id="Q9BPL7"/>
<dbReference type="EnsemblProtists" id="TGME49_268850-t26_1">
    <property type="protein sequence ID" value="TGME49_268850-t26_1"/>
    <property type="gene ID" value="TGME49_268850"/>
</dbReference>
<dbReference type="VEuPathDB" id="ToxoDB:TGARI_268850"/>
<dbReference type="VEuPathDB" id="ToxoDB:TGCAST_268850"/>
<dbReference type="VEuPathDB" id="ToxoDB:TGCOUG_268850"/>
<dbReference type="VEuPathDB" id="ToxoDB:TGDOM2_268850"/>
<dbReference type="VEuPathDB" id="ToxoDB:TGFOU_268850"/>
<dbReference type="VEuPathDB" id="ToxoDB:TGGT1_268850"/>
<dbReference type="VEuPathDB" id="ToxoDB:TGMAS_268850"/>
<dbReference type="VEuPathDB" id="ToxoDB:TGME49_268850"/>
<dbReference type="VEuPathDB" id="ToxoDB:TGP89_268850"/>
<dbReference type="VEuPathDB" id="ToxoDB:TGPRC2_268850"/>
<dbReference type="VEuPathDB" id="ToxoDB:TGRH88_082400"/>
<dbReference type="VEuPathDB" id="ToxoDB:TGRUB_268850"/>
<dbReference type="VEuPathDB" id="ToxoDB:TGVAND_268850"/>
<dbReference type="VEuPathDB" id="ToxoDB:TGVEG_268850"/>
<dbReference type="BRENDA" id="4.2.1.11">
    <property type="organism ID" value="6411"/>
</dbReference>
<dbReference type="SABIO-RK" id="Q9BPL7"/>
<dbReference type="UniPathway" id="UPA00109">
    <property type="reaction ID" value="UER00187"/>
</dbReference>
<dbReference type="GO" id="GO:0000015">
    <property type="term" value="C:phosphopyruvate hydratase complex"/>
    <property type="evidence" value="ECO:0007669"/>
    <property type="project" value="InterPro"/>
</dbReference>
<dbReference type="GO" id="GO:0000287">
    <property type="term" value="F:magnesium ion binding"/>
    <property type="evidence" value="ECO:0007669"/>
    <property type="project" value="InterPro"/>
</dbReference>
<dbReference type="GO" id="GO:0004634">
    <property type="term" value="F:phosphopyruvate hydratase activity"/>
    <property type="evidence" value="ECO:0007669"/>
    <property type="project" value="UniProtKB-EC"/>
</dbReference>
<dbReference type="GO" id="GO:0006096">
    <property type="term" value="P:glycolytic process"/>
    <property type="evidence" value="ECO:0007669"/>
    <property type="project" value="UniProtKB-UniPathway"/>
</dbReference>
<dbReference type="CDD" id="cd03313">
    <property type="entry name" value="enolase"/>
    <property type="match status" value="1"/>
</dbReference>
<dbReference type="FunFam" id="3.30.390.10:FF:000001">
    <property type="entry name" value="Enolase"/>
    <property type="match status" value="1"/>
</dbReference>
<dbReference type="FunFam" id="3.20.20.120:FF:000002">
    <property type="entry name" value="Enolase 1"/>
    <property type="match status" value="1"/>
</dbReference>
<dbReference type="Gene3D" id="3.20.20.120">
    <property type="entry name" value="Enolase-like C-terminal domain"/>
    <property type="match status" value="1"/>
</dbReference>
<dbReference type="Gene3D" id="3.30.390.10">
    <property type="entry name" value="Enolase-like, N-terminal domain"/>
    <property type="match status" value="1"/>
</dbReference>
<dbReference type="HAMAP" id="MF_00318">
    <property type="entry name" value="Enolase"/>
    <property type="match status" value="1"/>
</dbReference>
<dbReference type="InterPro" id="IPR000941">
    <property type="entry name" value="Enolase"/>
</dbReference>
<dbReference type="InterPro" id="IPR036849">
    <property type="entry name" value="Enolase-like_C_sf"/>
</dbReference>
<dbReference type="InterPro" id="IPR029017">
    <property type="entry name" value="Enolase-like_N"/>
</dbReference>
<dbReference type="InterPro" id="IPR020810">
    <property type="entry name" value="Enolase_C"/>
</dbReference>
<dbReference type="InterPro" id="IPR020809">
    <property type="entry name" value="Enolase_CS"/>
</dbReference>
<dbReference type="InterPro" id="IPR020811">
    <property type="entry name" value="Enolase_N"/>
</dbReference>
<dbReference type="NCBIfam" id="TIGR01060">
    <property type="entry name" value="eno"/>
    <property type="match status" value="1"/>
</dbReference>
<dbReference type="PANTHER" id="PTHR11902">
    <property type="entry name" value="ENOLASE"/>
    <property type="match status" value="1"/>
</dbReference>
<dbReference type="PANTHER" id="PTHR11902:SF1">
    <property type="entry name" value="ENOLASE"/>
    <property type="match status" value="1"/>
</dbReference>
<dbReference type="Pfam" id="PF00113">
    <property type="entry name" value="Enolase_C"/>
    <property type="match status" value="1"/>
</dbReference>
<dbReference type="Pfam" id="PF03952">
    <property type="entry name" value="Enolase_N"/>
    <property type="match status" value="1"/>
</dbReference>
<dbReference type="PIRSF" id="PIRSF001400">
    <property type="entry name" value="Enolase"/>
    <property type="match status" value="1"/>
</dbReference>
<dbReference type="PRINTS" id="PR00148">
    <property type="entry name" value="ENOLASE"/>
</dbReference>
<dbReference type="SFLD" id="SFLDF00002">
    <property type="entry name" value="enolase"/>
    <property type="match status" value="1"/>
</dbReference>
<dbReference type="SFLD" id="SFLDG00178">
    <property type="entry name" value="enolase"/>
    <property type="match status" value="1"/>
</dbReference>
<dbReference type="SMART" id="SM01192">
    <property type="entry name" value="Enolase_C"/>
    <property type="match status" value="1"/>
</dbReference>
<dbReference type="SMART" id="SM01193">
    <property type="entry name" value="Enolase_N"/>
    <property type="match status" value="1"/>
</dbReference>
<dbReference type="SUPFAM" id="SSF51604">
    <property type="entry name" value="Enolase C-terminal domain-like"/>
    <property type="match status" value="1"/>
</dbReference>
<dbReference type="SUPFAM" id="SSF54826">
    <property type="entry name" value="Enolase N-terminal domain-like"/>
    <property type="match status" value="1"/>
</dbReference>
<dbReference type="PROSITE" id="PS00164">
    <property type="entry name" value="ENOLASE"/>
    <property type="match status" value="1"/>
</dbReference>
<accession>Q9BPL7</accession>
<name>ENO2_TOXGO</name>
<gene>
    <name type="primary">ENO2</name>
</gene>
<evidence type="ECO:0000250" key="1"/>
<evidence type="ECO:0000269" key="2">
    <source>
    </source>
</evidence>
<evidence type="ECO:0000305" key="3"/>
<comment type="catalytic activity">
    <reaction>
        <text>(2R)-2-phosphoglycerate = phosphoenolpyruvate + H2O</text>
        <dbReference type="Rhea" id="RHEA:10164"/>
        <dbReference type="ChEBI" id="CHEBI:15377"/>
        <dbReference type="ChEBI" id="CHEBI:58289"/>
        <dbReference type="ChEBI" id="CHEBI:58702"/>
        <dbReference type="EC" id="4.2.1.11"/>
    </reaction>
</comment>
<comment type="cofactor">
    <cofactor evidence="1">
        <name>Mg(2+)</name>
        <dbReference type="ChEBI" id="CHEBI:18420"/>
    </cofactor>
    <text evidence="1">Mg(2+) is required for catalysis and for stabilizing the dimer.</text>
</comment>
<comment type="pathway">
    <text>Carbohydrate degradation; glycolysis; pyruvate from D-glyceraldehyde 3-phosphate: step 4/5.</text>
</comment>
<comment type="subunit">
    <text evidence="1">Homodimer.</text>
</comment>
<comment type="subcellular location">
    <subcellularLocation>
        <location evidence="1">Cytoplasm</location>
    </subcellularLocation>
</comment>
<comment type="developmental stage">
    <text evidence="2">Expressed preferentially in the tachyzoite stage.</text>
</comment>
<comment type="miscellaneous">
    <text>While ENO1 and ENO2 display similar K(m) values, the pure tachyzoite-specific enzyme (ENO2) has a threefold specific activity at V(max) compared with that of the bradyzoite-specific enolase (ENO1).</text>
</comment>
<comment type="similarity">
    <text evidence="3">Belongs to the enolase family.</text>
</comment>
<reference key="1">
    <citation type="journal article" date="2001" name="J. Mol. Biol.">
        <title>Differential expression of two plant-like enolases with distinct enzymatic and antigenic properties during stage conversion of the protozoan parasite Toxoplasma gondii.</title>
        <authorList>
            <person name="Dzierszinski F."/>
            <person name="Mortuaire M."/>
            <person name="Dendouga N."/>
            <person name="Popescu O."/>
            <person name="Tomavo S."/>
        </authorList>
    </citation>
    <scope>NUCLEOTIDE SEQUENCE [MRNA]</scope>
    <scope>CHARACTERIZATION</scope>
    <scope>DEVELOPMENTAL STAGE</scope>
    <source>
        <strain>76K</strain>
    </source>
</reference>
<reference key="2">
    <citation type="submission" date="2002-09" db="EMBL/GenBank/DDBJ databases">
        <title>Toxoplasma gondii enolases ENO1 and ENO2 loci.</title>
        <authorList>
            <person name="Kibe M."/>
            <person name="Tomavo S."/>
        </authorList>
    </citation>
    <scope>NUCLEOTIDE SEQUENCE</scope>
    <source>
        <strain>PLK</strain>
    </source>
</reference>
<keyword id="KW-0963">Cytoplasm</keyword>
<keyword id="KW-0324">Glycolysis</keyword>
<keyword id="KW-0456">Lyase</keyword>
<keyword id="KW-0460">Magnesium</keyword>
<keyword id="KW-0479">Metal-binding</keyword>
<feature type="chain" id="PRO_0000134094" description="Enolase 2">
    <location>
        <begin position="1"/>
        <end position="444"/>
    </location>
</feature>
<feature type="active site" description="Proton donor" evidence="1">
    <location>
        <position position="217"/>
    </location>
</feature>
<feature type="active site" description="Proton acceptor" evidence="1">
    <location>
        <position position="355"/>
    </location>
</feature>
<feature type="binding site" evidence="1">
    <location>
        <position position="165"/>
    </location>
    <ligand>
        <name>substrate</name>
    </ligand>
</feature>
<feature type="binding site" evidence="1">
    <location>
        <position position="174"/>
    </location>
    <ligand>
        <name>substrate</name>
    </ligand>
</feature>
<feature type="binding site" evidence="1">
    <location>
        <position position="252"/>
    </location>
    <ligand>
        <name>Mg(2+)</name>
        <dbReference type="ChEBI" id="CHEBI:18420"/>
    </ligand>
</feature>
<feature type="binding site" evidence="1">
    <location>
        <position position="303"/>
    </location>
    <ligand>
        <name>Mg(2+)</name>
        <dbReference type="ChEBI" id="CHEBI:18420"/>
    </ligand>
</feature>
<feature type="binding site" evidence="1">
    <location>
        <position position="303"/>
    </location>
    <ligand>
        <name>substrate</name>
    </ligand>
</feature>
<feature type="binding site" evidence="1">
    <location>
        <position position="330"/>
    </location>
    <ligand>
        <name>Mg(2+)</name>
        <dbReference type="ChEBI" id="CHEBI:18420"/>
    </ligand>
</feature>
<feature type="binding site" evidence="1">
    <location>
        <position position="330"/>
    </location>
    <ligand>
        <name>substrate</name>
    </ligand>
</feature>
<feature type="binding site" evidence="1">
    <location>
        <begin position="382"/>
        <end position="385"/>
    </location>
    <ligand>
        <name>substrate</name>
    </ligand>
</feature>
<feature type="binding site" evidence="1">
    <location>
        <position position="406"/>
    </location>
    <ligand>
        <name>substrate</name>
    </ligand>
</feature>
<sequence length="444" mass="48290">MVAIKDITARQILDSRGNPTVEVDLLTDGGCFRAAVPSGASTGIYEALELRDKDQTKFMGKGVMKAVENIHKIIKPALIGKDPCDQKGIDKLMVEELDGTKNEWGWCKSKLGANAILAVSMACCRAGAAAKGMPLYKYIATLAGNPTDKMVMPVPFFNVINGGSHAGNKVAMQEFMIAPVGASTIQEAIQIGAEVYQHLKVVIKKKYGLDATNVGDEGGFAPNISGATEALDLLMEAIKVSGHEGKVKIAADVAASEFFLQDDKVYDLDFKTPNNDKSQRKTGEELRNLYKDLCQKYPFVSIEDPFDQDDFHSYAQLTNEVGEKVQIVGDDLLVTNPTRIEKAVQEKACNGLLLKVNQIGTVSESIEACQLAQKNKWGVMVSHRSGETEDSFIADLVVGLRTGQIKTGAPCRSERLCKYNQLMRIEESLGSDCQYAGAGFRHPN</sequence>
<protein>
    <recommendedName>
        <fullName>Enolase 2</fullName>
        <ecNumber>4.2.1.11</ecNumber>
    </recommendedName>
    <alternativeName>
        <fullName>2-phospho-D-glycerate hydro-lyase 2</fullName>
    </alternativeName>
    <alternativeName>
        <fullName>2-phosphoglycerate dehydratase 2</fullName>
    </alternativeName>
</protein>
<organism>
    <name type="scientific">Toxoplasma gondii</name>
    <dbReference type="NCBI Taxonomy" id="5811"/>
    <lineage>
        <taxon>Eukaryota</taxon>
        <taxon>Sar</taxon>
        <taxon>Alveolata</taxon>
        <taxon>Apicomplexa</taxon>
        <taxon>Conoidasida</taxon>
        <taxon>Coccidia</taxon>
        <taxon>Eucoccidiorida</taxon>
        <taxon>Eimeriorina</taxon>
        <taxon>Sarcocystidae</taxon>
        <taxon>Toxoplasma</taxon>
    </lineage>
</organism>
<proteinExistence type="evidence at protein level"/>